<proteinExistence type="inferred from homology"/>
<evidence type="ECO:0000255" key="1">
    <source>
        <dbReference type="HAMAP-Rule" id="MF_01270"/>
    </source>
</evidence>
<accession>Q5X5G2</accession>
<protein>
    <recommendedName>
        <fullName evidence="1">Anhydro-N-acetylmuramic acid kinase</fullName>
        <ecNumber evidence="1">2.7.1.170</ecNumber>
    </recommendedName>
    <alternativeName>
        <fullName evidence="1">AnhMurNAc kinase</fullName>
    </alternativeName>
</protein>
<reference key="1">
    <citation type="journal article" date="2004" name="Nat. Genet.">
        <title>Evidence in the Legionella pneumophila genome for exploitation of host cell functions and high genome plasticity.</title>
        <authorList>
            <person name="Cazalet C."/>
            <person name="Rusniok C."/>
            <person name="Brueggemann H."/>
            <person name="Zidane N."/>
            <person name="Magnier A."/>
            <person name="Ma L."/>
            <person name="Tichit M."/>
            <person name="Jarraud S."/>
            <person name="Bouchier C."/>
            <person name="Vandenesch F."/>
            <person name="Kunst F."/>
            <person name="Etienne J."/>
            <person name="Glaser P."/>
            <person name="Buchrieser C."/>
        </authorList>
    </citation>
    <scope>NUCLEOTIDE SEQUENCE [LARGE SCALE GENOMIC DNA]</scope>
    <source>
        <strain>Paris</strain>
    </source>
</reference>
<dbReference type="EC" id="2.7.1.170" evidence="1"/>
<dbReference type="EMBL" id="CR628336">
    <property type="protein sequence ID" value="CAH12509.1"/>
    <property type="molecule type" value="Genomic_DNA"/>
</dbReference>
<dbReference type="RefSeq" id="WP_011213695.1">
    <property type="nucleotide sequence ID" value="NC_006368.1"/>
</dbReference>
<dbReference type="SMR" id="Q5X5G2"/>
<dbReference type="KEGG" id="lpp:lpp1358"/>
<dbReference type="LegioList" id="lpp1358"/>
<dbReference type="HOGENOM" id="CLU_038782_0_0_6"/>
<dbReference type="UniPathway" id="UPA00343"/>
<dbReference type="UniPathway" id="UPA00544"/>
<dbReference type="GO" id="GO:0005524">
    <property type="term" value="F:ATP binding"/>
    <property type="evidence" value="ECO:0007669"/>
    <property type="project" value="UniProtKB-UniRule"/>
</dbReference>
<dbReference type="GO" id="GO:0016301">
    <property type="term" value="F:kinase activity"/>
    <property type="evidence" value="ECO:0007669"/>
    <property type="project" value="UniProtKB-KW"/>
</dbReference>
<dbReference type="GO" id="GO:0016773">
    <property type="term" value="F:phosphotransferase activity, alcohol group as acceptor"/>
    <property type="evidence" value="ECO:0007669"/>
    <property type="project" value="UniProtKB-UniRule"/>
</dbReference>
<dbReference type="GO" id="GO:0097175">
    <property type="term" value="P:1,6-anhydro-N-acetyl-beta-muramic acid catabolic process"/>
    <property type="evidence" value="ECO:0007669"/>
    <property type="project" value="UniProtKB-UniRule"/>
</dbReference>
<dbReference type="GO" id="GO:0006040">
    <property type="term" value="P:amino sugar metabolic process"/>
    <property type="evidence" value="ECO:0007669"/>
    <property type="project" value="InterPro"/>
</dbReference>
<dbReference type="GO" id="GO:0009254">
    <property type="term" value="P:peptidoglycan turnover"/>
    <property type="evidence" value="ECO:0007669"/>
    <property type="project" value="UniProtKB-UniRule"/>
</dbReference>
<dbReference type="CDD" id="cd24050">
    <property type="entry name" value="ASKHA_NBD_ANMK"/>
    <property type="match status" value="1"/>
</dbReference>
<dbReference type="Gene3D" id="3.30.420.40">
    <property type="match status" value="2"/>
</dbReference>
<dbReference type="HAMAP" id="MF_01270">
    <property type="entry name" value="AnhMurNAc_kinase"/>
    <property type="match status" value="1"/>
</dbReference>
<dbReference type="InterPro" id="IPR005338">
    <property type="entry name" value="Anhydro_N_Ac-Mur_kinase"/>
</dbReference>
<dbReference type="InterPro" id="IPR043129">
    <property type="entry name" value="ATPase_NBD"/>
</dbReference>
<dbReference type="NCBIfam" id="NF007139">
    <property type="entry name" value="PRK09585.1-3"/>
    <property type="match status" value="1"/>
</dbReference>
<dbReference type="PANTHER" id="PTHR30605">
    <property type="entry name" value="ANHYDRO-N-ACETYLMURAMIC ACID KINASE"/>
    <property type="match status" value="1"/>
</dbReference>
<dbReference type="PANTHER" id="PTHR30605:SF0">
    <property type="entry name" value="ANHYDRO-N-ACETYLMURAMIC ACID KINASE"/>
    <property type="match status" value="1"/>
</dbReference>
<dbReference type="Pfam" id="PF03702">
    <property type="entry name" value="AnmK"/>
    <property type="match status" value="1"/>
</dbReference>
<dbReference type="SUPFAM" id="SSF53067">
    <property type="entry name" value="Actin-like ATPase domain"/>
    <property type="match status" value="1"/>
</dbReference>
<name>ANMK_LEGPA</name>
<keyword id="KW-0067">ATP-binding</keyword>
<keyword id="KW-0119">Carbohydrate metabolism</keyword>
<keyword id="KW-0418">Kinase</keyword>
<keyword id="KW-0547">Nucleotide-binding</keyword>
<keyword id="KW-0808">Transferase</keyword>
<comment type="function">
    <text evidence="1">Catalyzes the specific phosphorylation of 1,6-anhydro-N-acetylmuramic acid (anhMurNAc) with the simultaneous cleavage of the 1,6-anhydro ring, generating MurNAc-6-P. Is required for the utilization of anhMurNAc either imported from the medium or derived from its own cell wall murein, and thus plays a role in cell wall recycling.</text>
</comment>
<comment type="catalytic activity">
    <reaction evidence="1">
        <text>1,6-anhydro-N-acetyl-beta-muramate + ATP + H2O = N-acetyl-D-muramate 6-phosphate + ADP + H(+)</text>
        <dbReference type="Rhea" id="RHEA:24952"/>
        <dbReference type="ChEBI" id="CHEBI:15377"/>
        <dbReference type="ChEBI" id="CHEBI:15378"/>
        <dbReference type="ChEBI" id="CHEBI:30616"/>
        <dbReference type="ChEBI" id="CHEBI:58690"/>
        <dbReference type="ChEBI" id="CHEBI:58722"/>
        <dbReference type="ChEBI" id="CHEBI:456216"/>
        <dbReference type="EC" id="2.7.1.170"/>
    </reaction>
</comment>
<comment type="pathway">
    <text evidence="1">Amino-sugar metabolism; 1,6-anhydro-N-acetylmuramate degradation.</text>
</comment>
<comment type="pathway">
    <text evidence="1">Cell wall biogenesis; peptidoglycan recycling.</text>
</comment>
<comment type="similarity">
    <text evidence="1">Belongs to the anhydro-N-acetylmuramic acid kinase family.</text>
</comment>
<feature type="chain" id="PRO_0000250009" description="Anhydro-N-acetylmuramic acid kinase">
    <location>
        <begin position="1"/>
        <end position="366"/>
    </location>
</feature>
<feature type="binding site" evidence="1">
    <location>
        <begin position="10"/>
        <end position="17"/>
    </location>
    <ligand>
        <name>ATP</name>
        <dbReference type="ChEBI" id="CHEBI:30616"/>
    </ligand>
</feature>
<gene>
    <name evidence="1" type="primary">anmK</name>
    <name type="ordered locus">lpp1358</name>
</gene>
<organism>
    <name type="scientific">Legionella pneumophila (strain Paris)</name>
    <dbReference type="NCBI Taxonomy" id="297246"/>
    <lineage>
        <taxon>Bacteria</taxon>
        <taxon>Pseudomonadati</taxon>
        <taxon>Pseudomonadota</taxon>
        <taxon>Gammaproteobacteria</taxon>
        <taxon>Legionellales</taxon>
        <taxon>Legionellaceae</taxon>
        <taxon>Legionella</taxon>
    </lineage>
</organism>
<sequence>MSLYIGLMSGTSMDGIDAALLELPSNQLIHGITKQYSDDVRRNLDDLIIGNHLTLASICQLNTLIGREFAEAVRQLLIEIKVHPKEIQAIGSHGQTVCHDTSGNIPYTLQLGCGHTISSLTGITVVADFRTRDLVNGGQGAPFAPLYHQQIFSKVNESVAVVNIGGIANVTFIAKNQMTRGWDIGPGNCLMDAWIYKNKGALFDKNGVWASQGEVIHPLLEYLLQDPFFHLDSPKSIGKEYFSLSWLQKHLKPDYTPADIQATLLALTAHTIAETILNESGEIKQLYLCGGGAHNTHLKESLARLLPGITVKSIAELGISPDYLEAMMFAWLAAQTINQIPVNLASITGAKGIAILGAVYPIIKSY</sequence>